<protein>
    <recommendedName>
        <fullName>Cell cycle protein GpsB</fullName>
    </recommendedName>
    <alternativeName>
        <fullName>Guiding PBP1-shuttling protein</fullName>
    </alternativeName>
</protein>
<reference key="1">
    <citation type="journal article" date="1996" name="Microbiology">
        <title>Sequence analysis of the Bacillus subtilis chromosome region between the serA and kdg loci cloned in a yeast artificial chromosome.</title>
        <authorList>
            <person name="Sorokin A.V."/>
            <person name="Azevedo V."/>
            <person name="Zumstein E."/>
            <person name="Galleron N."/>
            <person name="Ehrlich S.D."/>
            <person name="Serror P."/>
        </authorList>
    </citation>
    <scope>NUCLEOTIDE SEQUENCE [GENOMIC DNA]</scope>
    <source>
        <strain>168 / Marburg / ATCC 6051 / DSM 10 / JCM 1465 / NBRC 13719 / NCIMB 3610 / NRRL NRS-744 / VKM B-501</strain>
    </source>
</reference>
<reference key="2">
    <citation type="journal article" date="1997" name="Nature">
        <title>The complete genome sequence of the Gram-positive bacterium Bacillus subtilis.</title>
        <authorList>
            <person name="Kunst F."/>
            <person name="Ogasawara N."/>
            <person name="Moszer I."/>
            <person name="Albertini A.M."/>
            <person name="Alloni G."/>
            <person name="Azevedo V."/>
            <person name="Bertero M.G."/>
            <person name="Bessieres P."/>
            <person name="Bolotin A."/>
            <person name="Borchert S."/>
            <person name="Borriss R."/>
            <person name="Boursier L."/>
            <person name="Brans A."/>
            <person name="Braun M."/>
            <person name="Brignell S.C."/>
            <person name="Bron S."/>
            <person name="Brouillet S."/>
            <person name="Bruschi C.V."/>
            <person name="Caldwell B."/>
            <person name="Capuano V."/>
            <person name="Carter N.M."/>
            <person name="Choi S.-K."/>
            <person name="Codani J.-J."/>
            <person name="Connerton I.F."/>
            <person name="Cummings N.J."/>
            <person name="Daniel R.A."/>
            <person name="Denizot F."/>
            <person name="Devine K.M."/>
            <person name="Duesterhoeft A."/>
            <person name="Ehrlich S.D."/>
            <person name="Emmerson P.T."/>
            <person name="Entian K.-D."/>
            <person name="Errington J."/>
            <person name="Fabret C."/>
            <person name="Ferrari E."/>
            <person name="Foulger D."/>
            <person name="Fritz C."/>
            <person name="Fujita M."/>
            <person name="Fujita Y."/>
            <person name="Fuma S."/>
            <person name="Galizzi A."/>
            <person name="Galleron N."/>
            <person name="Ghim S.-Y."/>
            <person name="Glaser P."/>
            <person name="Goffeau A."/>
            <person name="Golightly E.J."/>
            <person name="Grandi G."/>
            <person name="Guiseppi G."/>
            <person name="Guy B.J."/>
            <person name="Haga K."/>
            <person name="Haiech J."/>
            <person name="Harwood C.R."/>
            <person name="Henaut A."/>
            <person name="Hilbert H."/>
            <person name="Holsappel S."/>
            <person name="Hosono S."/>
            <person name="Hullo M.-F."/>
            <person name="Itaya M."/>
            <person name="Jones L.-M."/>
            <person name="Joris B."/>
            <person name="Karamata D."/>
            <person name="Kasahara Y."/>
            <person name="Klaerr-Blanchard M."/>
            <person name="Klein C."/>
            <person name="Kobayashi Y."/>
            <person name="Koetter P."/>
            <person name="Koningstein G."/>
            <person name="Krogh S."/>
            <person name="Kumano M."/>
            <person name="Kurita K."/>
            <person name="Lapidus A."/>
            <person name="Lardinois S."/>
            <person name="Lauber J."/>
            <person name="Lazarevic V."/>
            <person name="Lee S.-M."/>
            <person name="Levine A."/>
            <person name="Liu H."/>
            <person name="Masuda S."/>
            <person name="Mauel C."/>
            <person name="Medigue C."/>
            <person name="Medina N."/>
            <person name="Mellado R.P."/>
            <person name="Mizuno M."/>
            <person name="Moestl D."/>
            <person name="Nakai S."/>
            <person name="Noback M."/>
            <person name="Noone D."/>
            <person name="O'Reilly M."/>
            <person name="Ogawa K."/>
            <person name="Ogiwara A."/>
            <person name="Oudega B."/>
            <person name="Park S.-H."/>
            <person name="Parro V."/>
            <person name="Pohl T.M."/>
            <person name="Portetelle D."/>
            <person name="Porwollik S."/>
            <person name="Prescott A.M."/>
            <person name="Presecan E."/>
            <person name="Pujic P."/>
            <person name="Purnelle B."/>
            <person name="Rapoport G."/>
            <person name="Rey M."/>
            <person name="Reynolds S."/>
            <person name="Rieger M."/>
            <person name="Rivolta C."/>
            <person name="Rocha E."/>
            <person name="Roche B."/>
            <person name="Rose M."/>
            <person name="Sadaie Y."/>
            <person name="Sato T."/>
            <person name="Scanlan E."/>
            <person name="Schleich S."/>
            <person name="Schroeter R."/>
            <person name="Scoffone F."/>
            <person name="Sekiguchi J."/>
            <person name="Sekowska A."/>
            <person name="Seror S.J."/>
            <person name="Serror P."/>
            <person name="Shin B.-S."/>
            <person name="Soldo B."/>
            <person name="Sorokin A."/>
            <person name="Tacconi E."/>
            <person name="Takagi T."/>
            <person name="Takahashi H."/>
            <person name="Takemaru K."/>
            <person name="Takeuchi M."/>
            <person name="Tamakoshi A."/>
            <person name="Tanaka T."/>
            <person name="Terpstra P."/>
            <person name="Tognoni A."/>
            <person name="Tosato V."/>
            <person name="Uchiyama S."/>
            <person name="Vandenbol M."/>
            <person name="Vannier F."/>
            <person name="Vassarotti A."/>
            <person name="Viari A."/>
            <person name="Wambutt R."/>
            <person name="Wedler E."/>
            <person name="Wedler H."/>
            <person name="Weitzenegger T."/>
            <person name="Winters P."/>
            <person name="Wipat A."/>
            <person name="Yamamoto H."/>
            <person name="Yamane K."/>
            <person name="Yasumoto K."/>
            <person name="Yata K."/>
            <person name="Yoshida K."/>
            <person name="Yoshikawa H.-F."/>
            <person name="Zumstein E."/>
            <person name="Yoshikawa H."/>
            <person name="Danchin A."/>
        </authorList>
    </citation>
    <scope>NUCLEOTIDE SEQUENCE [LARGE SCALE GENOMIC DNA]</scope>
    <source>
        <strain>168</strain>
    </source>
</reference>
<reference key="3">
    <citation type="submission" date="2006-12" db="EMBL/GenBank/DDBJ databases">
        <title>Reconstructing the early history of Bacillus subtilis genetics through comparative genomics.</title>
        <authorList>
            <person name="Zeigler D.R."/>
        </authorList>
    </citation>
    <scope>NUCLEOTIDE SEQUENCE [GENOMIC DNA] OF 68-98</scope>
    <source>
        <strain>168</strain>
        <strain>168 / PY79</strain>
        <strain>168 / SMY</strain>
        <strain>23</strain>
        <strain>GSY505</strain>
        <strain>MU8U5U1</strain>
        <strain>NCIB3610</strain>
        <strain>PS832</strain>
        <strain>SB19</strain>
        <strain>SB491</strain>
    </source>
</reference>
<reference key="4">
    <citation type="journal article" date="2003" name="J. Bacteriol.">
        <title>Genome-wide transcriptional profiling analysis of adaptation of Bacillus subtilis to high salinity.</title>
        <authorList>
            <person name="Steil L."/>
            <person name="Hoffmann T."/>
            <person name="Budde I."/>
            <person name="Volker U."/>
            <person name="Bremer E."/>
        </authorList>
    </citation>
    <scope>INDUCTION BY HIGH-SALT CONDITIONS</scope>
    <source>
        <strain>168 / JH642</strain>
    </source>
</reference>
<reference key="5">
    <citation type="journal article" date="2008" name="Mol. Microbiol.">
        <title>Control of the cell elongation-division cycle by shuttling of PBP1 protein in Bacillus subtilis.</title>
        <authorList>
            <person name="Claessen D."/>
            <person name="Emmins R."/>
            <person name="Hamoen L.W."/>
            <person name="Daniel R.A."/>
            <person name="Errington J."/>
            <person name="Edwards D.H."/>
        </authorList>
    </citation>
    <scope>FUNCTION IN CELL DIVISION</scope>
    <scope>SUBUNIT</scope>
    <scope>SUBCELLULAR LOCATION</scope>
    <scope>INTERACTION WITH EZRA; MREC AND PBP1</scope>
    <source>
        <strain>168</strain>
    </source>
</reference>
<reference key="6">
    <citation type="journal article" date="2008" name="J. Bacteriol.">
        <title>Cytological characterization of YpsB, a novel component of the Bacillus subtilis divisome.</title>
        <authorList>
            <person name="Tavares J.R."/>
            <person name="de Souza R.F."/>
            <person name="Meira G.L.S."/>
            <person name="Gueiros-Filho F.J."/>
        </authorList>
    </citation>
    <scope>FUNCTION IN CELL DIVISION</scope>
    <scope>SUBCELLULAR LOCATION</scope>
    <scope>INTERACTION WITH DIVISOME PROTEINS</scope>
    <source>
        <strain>168 / PY79</strain>
    </source>
</reference>
<accession>P0CI74</accession>
<accession>A3F2S7</accession>
<accession>P50839</accession>
<gene>
    <name type="primary">gpsB</name>
    <name type="synonym">ypsB</name>
    <name type="ordered locus">BSU22180</name>
</gene>
<dbReference type="EMBL" id="L47838">
    <property type="protein sequence ID" value="AAB38472.1"/>
    <property type="molecule type" value="Genomic_DNA"/>
</dbReference>
<dbReference type="EMBL" id="AL009126">
    <property type="protein sequence ID" value="CAB14135.1"/>
    <property type="molecule type" value="Genomic_DNA"/>
</dbReference>
<dbReference type="EMBL" id="EF191442">
    <property type="protein sequence ID" value="ABN11504.1"/>
    <property type="molecule type" value="Genomic_DNA"/>
</dbReference>
<dbReference type="EMBL" id="EF191443">
    <property type="protein sequence ID" value="ABN11505.1"/>
    <property type="molecule type" value="Genomic_DNA"/>
</dbReference>
<dbReference type="EMBL" id="EF191444">
    <property type="protein sequence ID" value="ABN11506.1"/>
    <property type="molecule type" value="Genomic_DNA"/>
</dbReference>
<dbReference type="EMBL" id="EF191447">
    <property type="protein sequence ID" value="ABN11509.1"/>
    <property type="molecule type" value="Genomic_DNA"/>
</dbReference>
<dbReference type="EMBL" id="EF191449">
    <property type="protein sequence ID" value="ABN11510.1"/>
    <property type="molecule type" value="Genomic_DNA"/>
</dbReference>
<dbReference type="EMBL" id="EF191448">
    <property type="protein sequence ID" value="ABN11511.1"/>
    <property type="molecule type" value="Genomic_DNA"/>
</dbReference>
<dbReference type="EMBL" id="EF191450">
    <property type="protein sequence ID" value="ABN11512.1"/>
    <property type="molecule type" value="Genomic_DNA"/>
</dbReference>
<dbReference type="EMBL" id="EF191451">
    <property type="protein sequence ID" value="ABN11513.1"/>
    <property type="molecule type" value="Genomic_DNA"/>
</dbReference>
<dbReference type="EMBL" id="EF191452">
    <property type="protein sequence ID" value="ABN11514.1"/>
    <property type="molecule type" value="Genomic_DNA"/>
</dbReference>
<dbReference type="EMBL" id="EF191453">
    <property type="protein sequence ID" value="ABN11515.1"/>
    <property type="molecule type" value="Genomic_DNA"/>
</dbReference>
<dbReference type="EMBL" id="EF191454">
    <property type="protein sequence ID" value="ABN11516.1"/>
    <property type="molecule type" value="Genomic_DNA"/>
</dbReference>
<dbReference type="PIR" id="E69941">
    <property type="entry name" value="E69941"/>
</dbReference>
<dbReference type="RefSeq" id="NP_390100.1">
    <property type="nucleotide sequence ID" value="NC_000964.3"/>
</dbReference>
<dbReference type="RefSeq" id="WP_003225629.1">
    <property type="nucleotide sequence ID" value="NZ_OZ025638.1"/>
</dbReference>
<dbReference type="PDB" id="4UG3">
    <property type="method" value="X-ray"/>
    <property type="resolution" value="2.80 A"/>
    <property type="chains" value="A/B/C/D=1-68"/>
</dbReference>
<dbReference type="PDB" id="5AN5">
    <property type="method" value="X-ray"/>
    <property type="resolution" value="1.20 A"/>
    <property type="chains" value="B/C/D/E/F/G/H/I/J=76-98"/>
</dbReference>
<dbReference type="PDB" id="6GP7">
    <property type="method" value="X-ray"/>
    <property type="resolution" value="1.95 A"/>
    <property type="chains" value="A/B=5-64"/>
</dbReference>
<dbReference type="PDB" id="6GPZ">
    <property type="method" value="X-ray"/>
    <property type="resolution" value="1.60 A"/>
    <property type="chains" value="A/B=5-64"/>
</dbReference>
<dbReference type="PDBsum" id="4UG3"/>
<dbReference type="PDBsum" id="5AN5"/>
<dbReference type="PDBsum" id="6GP7"/>
<dbReference type="PDBsum" id="6GPZ"/>
<dbReference type="SMR" id="P0CI74"/>
<dbReference type="BioGRID" id="856653">
    <property type="interactions" value="3"/>
</dbReference>
<dbReference type="FunCoup" id="P0CI74">
    <property type="interactions" value="31"/>
</dbReference>
<dbReference type="IntAct" id="P0CI74">
    <property type="interactions" value="4"/>
</dbReference>
<dbReference type="STRING" id="224308.BSU22180"/>
<dbReference type="jPOST" id="P0CI74"/>
<dbReference type="PaxDb" id="224308-BSU22180"/>
<dbReference type="EnsemblBacteria" id="CAB14135">
    <property type="protein sequence ID" value="CAB14135"/>
    <property type="gene ID" value="BSU_22180"/>
</dbReference>
<dbReference type="GeneID" id="86873244"/>
<dbReference type="GeneID" id="939054"/>
<dbReference type="KEGG" id="bsu:BSU22180"/>
<dbReference type="PATRIC" id="fig|224308.179.peg.2422"/>
<dbReference type="eggNOG" id="COG3599">
    <property type="taxonomic scope" value="Bacteria"/>
</dbReference>
<dbReference type="InParanoid" id="P0CI74"/>
<dbReference type="OrthoDB" id="389699at2"/>
<dbReference type="PhylomeDB" id="P0CI74"/>
<dbReference type="BioCyc" id="BSUB:BSU22180-MONOMER"/>
<dbReference type="EvolutionaryTrace" id="P0CI74"/>
<dbReference type="PRO" id="PR:P0CI74"/>
<dbReference type="Proteomes" id="UP000001570">
    <property type="component" value="Chromosome"/>
</dbReference>
<dbReference type="GO" id="GO:0005737">
    <property type="term" value="C:cytoplasm"/>
    <property type="evidence" value="ECO:0007669"/>
    <property type="project" value="UniProtKB-SubCell"/>
</dbReference>
<dbReference type="GO" id="GO:0051301">
    <property type="term" value="P:cell division"/>
    <property type="evidence" value="ECO:0007669"/>
    <property type="project" value="UniProtKB-UniRule"/>
</dbReference>
<dbReference type="GO" id="GO:0009273">
    <property type="term" value="P:peptidoglycan-based cell wall biogenesis"/>
    <property type="evidence" value="ECO:0000318"/>
    <property type="project" value="GO_Central"/>
</dbReference>
<dbReference type="GO" id="GO:0008360">
    <property type="term" value="P:regulation of cell shape"/>
    <property type="evidence" value="ECO:0007669"/>
    <property type="project" value="UniProtKB-UniRule"/>
</dbReference>
<dbReference type="Gene3D" id="6.10.250.660">
    <property type="match status" value="1"/>
</dbReference>
<dbReference type="HAMAP" id="MF_02011">
    <property type="entry name" value="GpsB"/>
    <property type="match status" value="1"/>
</dbReference>
<dbReference type="InterPro" id="IPR011229">
    <property type="entry name" value="Cell_cycle_GpsB"/>
</dbReference>
<dbReference type="InterPro" id="IPR019933">
    <property type="entry name" value="DivIVA_domain"/>
</dbReference>
<dbReference type="InterPro" id="IPR007793">
    <property type="entry name" value="DivIVA_fam"/>
</dbReference>
<dbReference type="NCBIfam" id="TIGR03544">
    <property type="entry name" value="DivI1A_domain"/>
    <property type="match status" value="1"/>
</dbReference>
<dbReference type="NCBIfam" id="NF010725">
    <property type="entry name" value="PRK14127.1"/>
    <property type="match status" value="1"/>
</dbReference>
<dbReference type="PANTHER" id="PTHR35794:SF1">
    <property type="entry name" value="CELL CYCLE PROTEIN GPSB"/>
    <property type="match status" value="1"/>
</dbReference>
<dbReference type="PANTHER" id="PTHR35794">
    <property type="entry name" value="CELL DIVISION PROTEIN DIVIVA"/>
    <property type="match status" value="1"/>
</dbReference>
<dbReference type="Pfam" id="PF05103">
    <property type="entry name" value="DivIVA"/>
    <property type="match status" value="1"/>
</dbReference>
<dbReference type="PIRSF" id="PIRSF029938">
    <property type="entry name" value="UCP029938"/>
    <property type="match status" value="1"/>
</dbReference>
<proteinExistence type="evidence at protein level"/>
<comment type="function">
    <text evidence="3 4">Divisome component that associates with the complex late in its assembly, after the Z-ring is formed, and is dependent on DivIC and PBP2B for its recruitment to the divisome. Together with EzrA, is a key component of the system that regulates PBP1 localization during cell cycle progression. Its main role could be the removal of PBP1 from the cell pole after pole maturation is completed. Also contributes to the recruitment of PBP1 to the division complex. Not essential for septum formation.</text>
</comment>
<comment type="subunit">
    <text evidence="3 4">Forms polymers through the coiled coil domains. Interacts with PBP1, MreC and EzrA.</text>
</comment>
<comment type="subcellular location">
    <subcellularLocation>
        <location evidence="3 4">Cytoplasm</location>
    </subcellularLocation>
    <text>Shuttles between the lateral wall and the division site in a cell cycle-dependent manner.</text>
</comment>
<comment type="induction">
    <text evidence="2">By high-salt conditions.</text>
</comment>
<comment type="similarity">
    <text evidence="5">Belongs to the GpsB family.</text>
</comment>
<evidence type="ECO:0000255" key="1"/>
<evidence type="ECO:0000269" key="2">
    <source>
    </source>
</evidence>
<evidence type="ECO:0000269" key="3">
    <source>
    </source>
</evidence>
<evidence type="ECO:0000269" key="4">
    <source>
    </source>
</evidence>
<evidence type="ECO:0000305" key="5"/>
<evidence type="ECO:0007829" key="6">
    <source>
        <dbReference type="PDB" id="5AN5"/>
    </source>
</evidence>
<evidence type="ECO:0007829" key="7">
    <source>
        <dbReference type="PDB" id="6GPZ"/>
    </source>
</evidence>
<feature type="chain" id="PRO_0000049725" description="Cell cycle protein GpsB">
    <location>
        <begin position="1"/>
        <end position="98"/>
    </location>
</feature>
<feature type="coiled-coil region" evidence="1">
    <location>
        <begin position="34"/>
        <end position="71"/>
    </location>
</feature>
<feature type="helix" evidence="7">
    <location>
        <begin position="10"/>
        <end position="15"/>
    </location>
</feature>
<feature type="strand" evidence="7">
    <location>
        <begin position="20"/>
        <end position="22"/>
    </location>
</feature>
<feature type="helix" evidence="7">
    <location>
        <begin position="27"/>
        <end position="62"/>
    </location>
</feature>
<feature type="helix" evidence="6">
    <location>
        <begin position="76"/>
        <end position="92"/>
    </location>
</feature>
<sequence>MLADKVKLSAKEILEKEFKTGVRGYKQEDVDKFLDMIIKDYETFHQEIEELQQENLQLKKQLEEASKKQPVQSNTTNFDILKRLSNLEKHVFGSKLYD</sequence>
<organism>
    <name type="scientific">Bacillus subtilis (strain 168)</name>
    <dbReference type="NCBI Taxonomy" id="224308"/>
    <lineage>
        <taxon>Bacteria</taxon>
        <taxon>Bacillati</taxon>
        <taxon>Bacillota</taxon>
        <taxon>Bacilli</taxon>
        <taxon>Bacillales</taxon>
        <taxon>Bacillaceae</taxon>
        <taxon>Bacillus</taxon>
    </lineage>
</organism>
<name>GPSB_BACSU</name>
<keyword id="KW-0002">3D-structure</keyword>
<keyword id="KW-0131">Cell cycle</keyword>
<keyword id="KW-0132">Cell division</keyword>
<keyword id="KW-0133">Cell shape</keyword>
<keyword id="KW-0175">Coiled coil</keyword>
<keyword id="KW-0963">Cytoplasm</keyword>
<keyword id="KW-1185">Reference proteome</keyword>